<protein>
    <recommendedName>
        <fullName>F-box/kelch-repeat protein At4g29370</fullName>
    </recommendedName>
</protein>
<organism>
    <name type="scientific">Arabidopsis thaliana</name>
    <name type="common">Mouse-ear cress</name>
    <dbReference type="NCBI Taxonomy" id="3702"/>
    <lineage>
        <taxon>Eukaryota</taxon>
        <taxon>Viridiplantae</taxon>
        <taxon>Streptophyta</taxon>
        <taxon>Embryophyta</taxon>
        <taxon>Tracheophyta</taxon>
        <taxon>Spermatophyta</taxon>
        <taxon>Magnoliopsida</taxon>
        <taxon>eudicotyledons</taxon>
        <taxon>Gunneridae</taxon>
        <taxon>Pentapetalae</taxon>
        <taxon>rosids</taxon>
        <taxon>malvids</taxon>
        <taxon>Brassicales</taxon>
        <taxon>Brassicaceae</taxon>
        <taxon>Camelineae</taxon>
        <taxon>Arabidopsis</taxon>
    </lineage>
</organism>
<gene>
    <name type="ordered locus">At4g29370</name>
    <name type="ORF">F17A13.190</name>
</gene>
<proteinExistence type="predicted"/>
<evidence type="ECO:0000255" key="1">
    <source>
        <dbReference type="PROSITE-ProRule" id="PRU00080"/>
    </source>
</evidence>
<sequence>MIPKEEVERPQKKTKLPSLPCETSLFLQLPDEILVNCLARLSKSSYRSLSLVCKTFRSLLHSQPLYSARYQLGTTEICCLYLCLRFVTATEPVSRWFTLSRRSGSVLVPSDHSLPYSNSTVTMGSKIYGEHMGDAFGPSSAIWIYDCFTRSWGDVPNMKMKRENASACVLDDKIYVMGGCDSGGINWFEMFDVKTQCWRPLPANPDVKVMTEDNVRKIDVVGGKIYVKTGAEFMDWIYDVKRGKWSAADEYMSLLWSNSWCVIENVMYCYSCSRYRWYDLEARMWREVKGLKYLKRYSSASNDNRNRMVELVNFGGKLAILWDRFERPGRSENKNIWCAMVALNRDFEGEIWGTVEWLNVVLTVPKSYNFLRPIAVSV</sequence>
<feature type="chain" id="PRO_0000283248" description="F-box/kelch-repeat protein At4g29370">
    <location>
        <begin position="1"/>
        <end position="378"/>
    </location>
</feature>
<feature type="domain" description="F-box" evidence="1">
    <location>
        <begin position="23"/>
        <end position="69"/>
    </location>
</feature>
<feature type="repeat" description="Kelch 1">
    <location>
        <begin position="124"/>
        <end position="172"/>
    </location>
</feature>
<feature type="repeat" description="Kelch 2">
    <location>
        <begin position="173"/>
        <end position="218"/>
    </location>
</feature>
<feature type="repeat" description="Kelch 3">
    <location>
        <begin position="220"/>
        <end position="259"/>
    </location>
</feature>
<feature type="repeat" description="Kelch 4">
    <location>
        <begin position="260"/>
        <end position="305"/>
    </location>
</feature>
<keyword id="KW-0880">Kelch repeat</keyword>
<keyword id="KW-1185">Reference proteome</keyword>
<keyword id="KW-0677">Repeat</keyword>
<accession>Q9M0E6</accession>
<reference key="1">
    <citation type="journal article" date="1999" name="Nature">
        <title>Sequence and analysis of chromosome 4 of the plant Arabidopsis thaliana.</title>
        <authorList>
            <person name="Mayer K.F.X."/>
            <person name="Schueller C."/>
            <person name="Wambutt R."/>
            <person name="Murphy G."/>
            <person name="Volckaert G."/>
            <person name="Pohl T."/>
            <person name="Duesterhoeft A."/>
            <person name="Stiekema W."/>
            <person name="Entian K.-D."/>
            <person name="Terryn N."/>
            <person name="Harris B."/>
            <person name="Ansorge W."/>
            <person name="Brandt P."/>
            <person name="Grivell L.A."/>
            <person name="Rieger M."/>
            <person name="Weichselgartner M."/>
            <person name="de Simone V."/>
            <person name="Obermaier B."/>
            <person name="Mache R."/>
            <person name="Mueller M."/>
            <person name="Kreis M."/>
            <person name="Delseny M."/>
            <person name="Puigdomenech P."/>
            <person name="Watson M."/>
            <person name="Schmidtheini T."/>
            <person name="Reichert B."/>
            <person name="Portetelle D."/>
            <person name="Perez-Alonso M."/>
            <person name="Boutry M."/>
            <person name="Bancroft I."/>
            <person name="Vos P."/>
            <person name="Hoheisel J."/>
            <person name="Zimmermann W."/>
            <person name="Wedler H."/>
            <person name="Ridley P."/>
            <person name="Langham S.-A."/>
            <person name="McCullagh B."/>
            <person name="Bilham L."/>
            <person name="Robben J."/>
            <person name="van der Schueren J."/>
            <person name="Grymonprez B."/>
            <person name="Chuang Y.-J."/>
            <person name="Vandenbussche F."/>
            <person name="Braeken M."/>
            <person name="Weltjens I."/>
            <person name="Voet M."/>
            <person name="Bastiaens I."/>
            <person name="Aert R."/>
            <person name="Defoor E."/>
            <person name="Weitzenegger T."/>
            <person name="Bothe G."/>
            <person name="Ramsperger U."/>
            <person name="Hilbert H."/>
            <person name="Braun M."/>
            <person name="Holzer E."/>
            <person name="Brandt A."/>
            <person name="Peters S."/>
            <person name="van Staveren M."/>
            <person name="Dirkse W."/>
            <person name="Mooijman P."/>
            <person name="Klein Lankhorst R."/>
            <person name="Rose M."/>
            <person name="Hauf J."/>
            <person name="Koetter P."/>
            <person name="Berneiser S."/>
            <person name="Hempel S."/>
            <person name="Feldpausch M."/>
            <person name="Lamberth S."/>
            <person name="Van den Daele H."/>
            <person name="De Keyser A."/>
            <person name="Buysshaert C."/>
            <person name="Gielen J."/>
            <person name="Villarroel R."/>
            <person name="De Clercq R."/>
            <person name="van Montagu M."/>
            <person name="Rogers J."/>
            <person name="Cronin A."/>
            <person name="Quail M.A."/>
            <person name="Bray-Allen S."/>
            <person name="Clark L."/>
            <person name="Doggett J."/>
            <person name="Hall S."/>
            <person name="Kay M."/>
            <person name="Lennard N."/>
            <person name="McLay K."/>
            <person name="Mayes R."/>
            <person name="Pettett A."/>
            <person name="Rajandream M.A."/>
            <person name="Lyne M."/>
            <person name="Benes V."/>
            <person name="Rechmann S."/>
            <person name="Borkova D."/>
            <person name="Bloecker H."/>
            <person name="Scharfe M."/>
            <person name="Grimm M."/>
            <person name="Loehnert T.-H."/>
            <person name="Dose S."/>
            <person name="de Haan M."/>
            <person name="Maarse A.C."/>
            <person name="Schaefer M."/>
            <person name="Mueller-Auer S."/>
            <person name="Gabel C."/>
            <person name="Fuchs M."/>
            <person name="Fartmann B."/>
            <person name="Granderath K."/>
            <person name="Dauner D."/>
            <person name="Herzl A."/>
            <person name="Neumann S."/>
            <person name="Argiriou A."/>
            <person name="Vitale D."/>
            <person name="Liguori R."/>
            <person name="Piravandi E."/>
            <person name="Massenet O."/>
            <person name="Quigley F."/>
            <person name="Clabauld G."/>
            <person name="Muendlein A."/>
            <person name="Felber R."/>
            <person name="Schnabl S."/>
            <person name="Hiller R."/>
            <person name="Schmidt W."/>
            <person name="Lecharny A."/>
            <person name="Aubourg S."/>
            <person name="Chefdor F."/>
            <person name="Cooke R."/>
            <person name="Berger C."/>
            <person name="Monfort A."/>
            <person name="Casacuberta E."/>
            <person name="Gibbons T."/>
            <person name="Weber N."/>
            <person name="Vandenbol M."/>
            <person name="Bargues M."/>
            <person name="Terol J."/>
            <person name="Torres A."/>
            <person name="Perez-Perez A."/>
            <person name="Purnelle B."/>
            <person name="Bent E."/>
            <person name="Johnson S."/>
            <person name="Tacon D."/>
            <person name="Jesse T."/>
            <person name="Heijnen L."/>
            <person name="Schwarz S."/>
            <person name="Scholler P."/>
            <person name="Heber S."/>
            <person name="Francs P."/>
            <person name="Bielke C."/>
            <person name="Frishman D."/>
            <person name="Haase D."/>
            <person name="Lemcke K."/>
            <person name="Mewes H.-W."/>
            <person name="Stocker S."/>
            <person name="Zaccaria P."/>
            <person name="Bevan M."/>
            <person name="Wilson R.K."/>
            <person name="de la Bastide M."/>
            <person name="Habermann K."/>
            <person name="Parnell L."/>
            <person name="Dedhia N."/>
            <person name="Gnoj L."/>
            <person name="Schutz K."/>
            <person name="Huang E."/>
            <person name="Spiegel L."/>
            <person name="Sekhon M."/>
            <person name="Murray J."/>
            <person name="Sheet P."/>
            <person name="Cordes M."/>
            <person name="Abu-Threideh J."/>
            <person name="Stoneking T."/>
            <person name="Kalicki J."/>
            <person name="Graves T."/>
            <person name="Harmon G."/>
            <person name="Edwards J."/>
            <person name="Latreille P."/>
            <person name="Courtney L."/>
            <person name="Cloud J."/>
            <person name="Abbott A."/>
            <person name="Scott K."/>
            <person name="Johnson D."/>
            <person name="Minx P."/>
            <person name="Bentley D."/>
            <person name="Fulton B."/>
            <person name="Miller N."/>
            <person name="Greco T."/>
            <person name="Kemp K."/>
            <person name="Kramer J."/>
            <person name="Fulton L."/>
            <person name="Mardis E."/>
            <person name="Dante M."/>
            <person name="Pepin K."/>
            <person name="Hillier L.W."/>
            <person name="Nelson J."/>
            <person name="Spieth J."/>
            <person name="Ryan E."/>
            <person name="Andrews S."/>
            <person name="Geisel C."/>
            <person name="Layman D."/>
            <person name="Du H."/>
            <person name="Ali J."/>
            <person name="Berghoff A."/>
            <person name="Jones K."/>
            <person name="Drone K."/>
            <person name="Cotton M."/>
            <person name="Joshu C."/>
            <person name="Antonoiu B."/>
            <person name="Zidanic M."/>
            <person name="Strong C."/>
            <person name="Sun H."/>
            <person name="Lamar B."/>
            <person name="Yordan C."/>
            <person name="Ma P."/>
            <person name="Zhong J."/>
            <person name="Preston R."/>
            <person name="Vil D."/>
            <person name="Shekher M."/>
            <person name="Matero A."/>
            <person name="Shah R."/>
            <person name="Swaby I.K."/>
            <person name="O'Shaughnessy A."/>
            <person name="Rodriguez M."/>
            <person name="Hoffman J."/>
            <person name="Till S."/>
            <person name="Granat S."/>
            <person name="Shohdy N."/>
            <person name="Hasegawa A."/>
            <person name="Hameed A."/>
            <person name="Lodhi M."/>
            <person name="Johnson A."/>
            <person name="Chen E."/>
            <person name="Marra M.A."/>
            <person name="Martienssen R."/>
            <person name="McCombie W.R."/>
        </authorList>
    </citation>
    <scope>NUCLEOTIDE SEQUENCE [LARGE SCALE GENOMIC DNA]</scope>
    <source>
        <strain>cv. Columbia</strain>
    </source>
</reference>
<reference key="2">
    <citation type="journal article" date="2017" name="Plant J.">
        <title>Araport11: a complete reannotation of the Arabidopsis thaliana reference genome.</title>
        <authorList>
            <person name="Cheng C.Y."/>
            <person name="Krishnakumar V."/>
            <person name="Chan A.P."/>
            <person name="Thibaud-Nissen F."/>
            <person name="Schobel S."/>
            <person name="Town C.D."/>
        </authorList>
    </citation>
    <scope>GENOME REANNOTATION</scope>
    <source>
        <strain>cv. Columbia</strain>
    </source>
</reference>
<name>FBK90_ARATH</name>
<dbReference type="EMBL" id="AL161574">
    <property type="protein sequence ID" value="CAB79695.1"/>
    <property type="molecule type" value="Genomic_DNA"/>
</dbReference>
<dbReference type="EMBL" id="CP002687">
    <property type="protein sequence ID" value="AEE85623.1"/>
    <property type="molecule type" value="Genomic_DNA"/>
</dbReference>
<dbReference type="PIR" id="G85342">
    <property type="entry name" value="G85342"/>
</dbReference>
<dbReference type="RefSeq" id="NP_194666.1">
    <property type="nucleotide sequence ID" value="NM_119082.2"/>
</dbReference>
<dbReference type="SMR" id="Q9M0E6"/>
<dbReference type="BioGRID" id="14345">
    <property type="interactions" value="1"/>
</dbReference>
<dbReference type="FunCoup" id="Q9M0E6">
    <property type="interactions" value="1"/>
</dbReference>
<dbReference type="STRING" id="3702.Q9M0E6"/>
<dbReference type="PaxDb" id="3702-AT4G29370.1"/>
<dbReference type="EnsemblPlants" id="AT4G29370.1">
    <property type="protein sequence ID" value="AT4G29370.1"/>
    <property type="gene ID" value="AT4G29370"/>
</dbReference>
<dbReference type="GeneID" id="829058"/>
<dbReference type="Gramene" id="AT4G29370.1">
    <property type="protein sequence ID" value="AT4G29370.1"/>
    <property type="gene ID" value="AT4G29370"/>
</dbReference>
<dbReference type="KEGG" id="ath:AT4G29370"/>
<dbReference type="Araport" id="AT4G29370"/>
<dbReference type="TAIR" id="AT4G29370"/>
<dbReference type="eggNOG" id="KOG1072">
    <property type="taxonomic scope" value="Eukaryota"/>
</dbReference>
<dbReference type="HOGENOM" id="CLU_032521_1_2_1"/>
<dbReference type="InParanoid" id="Q9M0E6"/>
<dbReference type="OMA" id="KNIWCAM"/>
<dbReference type="OrthoDB" id="8185403at2759"/>
<dbReference type="PhylomeDB" id="Q9M0E6"/>
<dbReference type="PRO" id="PR:Q9M0E6"/>
<dbReference type="Proteomes" id="UP000006548">
    <property type="component" value="Chromosome 4"/>
</dbReference>
<dbReference type="ExpressionAtlas" id="Q9M0E6">
    <property type="expression patterns" value="baseline and differential"/>
</dbReference>
<dbReference type="CDD" id="cd22152">
    <property type="entry name" value="F-box_AtAFR-like"/>
    <property type="match status" value="1"/>
</dbReference>
<dbReference type="Gene3D" id="1.20.1280.50">
    <property type="match status" value="1"/>
</dbReference>
<dbReference type="Gene3D" id="2.120.10.80">
    <property type="entry name" value="Kelch-type beta propeller"/>
    <property type="match status" value="1"/>
</dbReference>
<dbReference type="InterPro" id="IPR036047">
    <property type="entry name" value="F-box-like_dom_sf"/>
</dbReference>
<dbReference type="InterPro" id="IPR050354">
    <property type="entry name" value="F-box/kelch-repeat_ARATH"/>
</dbReference>
<dbReference type="InterPro" id="IPR001810">
    <property type="entry name" value="F-box_dom"/>
</dbReference>
<dbReference type="InterPro" id="IPR015915">
    <property type="entry name" value="Kelch-typ_b-propeller"/>
</dbReference>
<dbReference type="InterPro" id="IPR006652">
    <property type="entry name" value="Kelch_1"/>
</dbReference>
<dbReference type="PANTHER" id="PTHR24414:SF90">
    <property type="entry name" value="F-BOX DOMAIN-CONTAINING PROTEIN"/>
    <property type="match status" value="1"/>
</dbReference>
<dbReference type="PANTHER" id="PTHR24414">
    <property type="entry name" value="F-BOX/KELCH-REPEAT PROTEIN SKIP4"/>
    <property type="match status" value="1"/>
</dbReference>
<dbReference type="Pfam" id="PF00646">
    <property type="entry name" value="F-box"/>
    <property type="match status" value="1"/>
</dbReference>
<dbReference type="Pfam" id="PF25210">
    <property type="entry name" value="Kelch_FKB95"/>
    <property type="match status" value="1"/>
</dbReference>
<dbReference type="SMART" id="SM00256">
    <property type="entry name" value="FBOX"/>
    <property type="match status" value="1"/>
</dbReference>
<dbReference type="SMART" id="SM00612">
    <property type="entry name" value="Kelch"/>
    <property type="match status" value="2"/>
</dbReference>
<dbReference type="SUPFAM" id="SSF81383">
    <property type="entry name" value="F-box domain"/>
    <property type="match status" value="1"/>
</dbReference>
<dbReference type="SUPFAM" id="SSF117281">
    <property type="entry name" value="Kelch motif"/>
    <property type="match status" value="1"/>
</dbReference>
<dbReference type="PROSITE" id="PS50181">
    <property type="entry name" value="FBOX"/>
    <property type="match status" value="1"/>
</dbReference>